<sequence>MNFETIIGLEVHVELKTNSKIFSPAPAHFGEDPNANTNIVDWSFPGVLPVMNKGVIDYGIKAALALNMDIHQRMHFDRKNYFYPDNPKAYQISQFDEPIGYNGWIEIELEDGSTKKIRIERAHLEEDAGKNTHGADGYSYVDLNRQGVPLIEIVSEADMRSPEEAYAYLTALKEIIQYTGISDVKMEEGSMRVDANISIRPYGQEAFGVKTELKNLNSFNFVRRGLAYEEKRQAEVLRSGGQIQQETRRYDEATGETLLMRVKEGSADYRYFPEPDLPIFEIEDEWIEKVRAELPAFPKERRAKYVNDLGLSAYDAAQLTSSKAISDFFESALAQGADAKAVSNWLQGDVAQYLNTENQTIDQIGLTPENLTEMLQLVADGTISSKIAKKVFVHLAKNGGSAKEYVKSAGLIQISDPAQLLPIIQEVFANNEKALNDYKGGNKNAAKSLVGQIMKATRGQANPQVAQKLLNEELAKLTD</sequence>
<accession>Q8DSG6</accession>
<dbReference type="EC" id="6.3.5.-" evidence="1"/>
<dbReference type="EMBL" id="AE014133">
    <property type="protein sequence ID" value="AAN59444.1"/>
    <property type="molecule type" value="Genomic_DNA"/>
</dbReference>
<dbReference type="RefSeq" id="NP_722138.1">
    <property type="nucleotide sequence ID" value="NC_004350.2"/>
</dbReference>
<dbReference type="RefSeq" id="WP_002263477.1">
    <property type="nucleotide sequence ID" value="NC_004350.2"/>
</dbReference>
<dbReference type="SMR" id="Q8DSG6"/>
<dbReference type="STRING" id="210007.SMU_1819"/>
<dbReference type="KEGG" id="smu:SMU_1819"/>
<dbReference type="PATRIC" id="fig|210007.7.peg.1624"/>
<dbReference type="eggNOG" id="COG0064">
    <property type="taxonomic scope" value="Bacteria"/>
</dbReference>
<dbReference type="HOGENOM" id="CLU_019240_0_0_9"/>
<dbReference type="OrthoDB" id="9804078at2"/>
<dbReference type="PhylomeDB" id="Q8DSG6"/>
<dbReference type="Proteomes" id="UP000002512">
    <property type="component" value="Chromosome"/>
</dbReference>
<dbReference type="GO" id="GO:0050566">
    <property type="term" value="F:asparaginyl-tRNA synthase (glutamine-hydrolyzing) activity"/>
    <property type="evidence" value="ECO:0007669"/>
    <property type="project" value="RHEA"/>
</dbReference>
<dbReference type="GO" id="GO:0005524">
    <property type="term" value="F:ATP binding"/>
    <property type="evidence" value="ECO:0007669"/>
    <property type="project" value="UniProtKB-KW"/>
</dbReference>
<dbReference type="GO" id="GO:0050567">
    <property type="term" value="F:glutaminyl-tRNA synthase (glutamine-hydrolyzing) activity"/>
    <property type="evidence" value="ECO:0007669"/>
    <property type="project" value="UniProtKB-UniRule"/>
</dbReference>
<dbReference type="GO" id="GO:0070681">
    <property type="term" value="P:glutaminyl-tRNAGln biosynthesis via transamidation"/>
    <property type="evidence" value="ECO:0007669"/>
    <property type="project" value="TreeGrafter"/>
</dbReference>
<dbReference type="GO" id="GO:0006412">
    <property type="term" value="P:translation"/>
    <property type="evidence" value="ECO:0007669"/>
    <property type="project" value="UniProtKB-UniRule"/>
</dbReference>
<dbReference type="FunFam" id="1.10.10.410:FF:000001">
    <property type="entry name" value="Aspartyl/glutamyl-tRNA(Asn/Gln) amidotransferase subunit B"/>
    <property type="match status" value="1"/>
</dbReference>
<dbReference type="FunFam" id="1.10.150.380:FF:000001">
    <property type="entry name" value="Aspartyl/glutamyl-tRNA(Asn/Gln) amidotransferase subunit B"/>
    <property type="match status" value="1"/>
</dbReference>
<dbReference type="Gene3D" id="1.10.10.410">
    <property type="match status" value="1"/>
</dbReference>
<dbReference type="Gene3D" id="1.10.150.380">
    <property type="entry name" value="GatB domain, N-terminal subdomain"/>
    <property type="match status" value="1"/>
</dbReference>
<dbReference type="HAMAP" id="MF_00121">
    <property type="entry name" value="GatB"/>
    <property type="match status" value="1"/>
</dbReference>
<dbReference type="InterPro" id="IPR017959">
    <property type="entry name" value="Asn/Gln-tRNA_amidoTrfase_suB/E"/>
</dbReference>
<dbReference type="InterPro" id="IPR006075">
    <property type="entry name" value="Asn/Gln-tRNA_Trfase_suB/E_cat"/>
</dbReference>
<dbReference type="InterPro" id="IPR018027">
    <property type="entry name" value="Asn/Gln_amidotransferase"/>
</dbReference>
<dbReference type="InterPro" id="IPR003789">
    <property type="entry name" value="Asn/Gln_tRNA_amidoTrase-B-like"/>
</dbReference>
<dbReference type="InterPro" id="IPR004413">
    <property type="entry name" value="GatB"/>
</dbReference>
<dbReference type="InterPro" id="IPR042114">
    <property type="entry name" value="GatB_C_1"/>
</dbReference>
<dbReference type="InterPro" id="IPR023168">
    <property type="entry name" value="GatB_Yqey_C_2"/>
</dbReference>
<dbReference type="InterPro" id="IPR017958">
    <property type="entry name" value="Gln-tRNA_amidoTrfase_suB_CS"/>
</dbReference>
<dbReference type="InterPro" id="IPR014746">
    <property type="entry name" value="Gln_synth/guanido_kin_cat_dom"/>
</dbReference>
<dbReference type="NCBIfam" id="TIGR00133">
    <property type="entry name" value="gatB"/>
    <property type="match status" value="1"/>
</dbReference>
<dbReference type="NCBIfam" id="NF004011">
    <property type="entry name" value="PRK05477.1-1"/>
    <property type="match status" value="1"/>
</dbReference>
<dbReference type="NCBIfam" id="NF004012">
    <property type="entry name" value="PRK05477.1-2"/>
    <property type="match status" value="1"/>
</dbReference>
<dbReference type="NCBIfam" id="NF004014">
    <property type="entry name" value="PRK05477.1-4"/>
    <property type="match status" value="1"/>
</dbReference>
<dbReference type="PANTHER" id="PTHR11659">
    <property type="entry name" value="GLUTAMYL-TRNA GLN AMIDOTRANSFERASE SUBUNIT B MITOCHONDRIAL AND PROKARYOTIC PET112-RELATED"/>
    <property type="match status" value="1"/>
</dbReference>
<dbReference type="PANTHER" id="PTHR11659:SF0">
    <property type="entry name" value="GLUTAMYL-TRNA(GLN) AMIDOTRANSFERASE SUBUNIT B, MITOCHONDRIAL"/>
    <property type="match status" value="1"/>
</dbReference>
<dbReference type="Pfam" id="PF02934">
    <property type="entry name" value="GatB_N"/>
    <property type="match status" value="1"/>
</dbReference>
<dbReference type="Pfam" id="PF02637">
    <property type="entry name" value="GatB_Yqey"/>
    <property type="match status" value="1"/>
</dbReference>
<dbReference type="SMART" id="SM00845">
    <property type="entry name" value="GatB_Yqey"/>
    <property type="match status" value="1"/>
</dbReference>
<dbReference type="SUPFAM" id="SSF89095">
    <property type="entry name" value="GatB/YqeY motif"/>
    <property type="match status" value="1"/>
</dbReference>
<dbReference type="SUPFAM" id="SSF55931">
    <property type="entry name" value="Glutamine synthetase/guanido kinase"/>
    <property type="match status" value="1"/>
</dbReference>
<dbReference type="PROSITE" id="PS01234">
    <property type="entry name" value="GATB"/>
    <property type="match status" value="1"/>
</dbReference>
<feature type="chain" id="PRO_0000148847" description="Aspartyl/glutamyl-tRNA(Asn/Gln) amidotransferase subunit B">
    <location>
        <begin position="1"/>
        <end position="479"/>
    </location>
</feature>
<reference key="1">
    <citation type="journal article" date="2002" name="Proc. Natl. Acad. Sci. U.S.A.">
        <title>Genome sequence of Streptococcus mutans UA159, a cariogenic dental pathogen.</title>
        <authorList>
            <person name="Ajdic D.J."/>
            <person name="McShan W.M."/>
            <person name="McLaughlin R.E."/>
            <person name="Savic G."/>
            <person name="Chang J."/>
            <person name="Carson M.B."/>
            <person name="Primeaux C."/>
            <person name="Tian R."/>
            <person name="Kenton S."/>
            <person name="Jia H.G."/>
            <person name="Lin S.P."/>
            <person name="Qian Y."/>
            <person name="Li S."/>
            <person name="Zhu H."/>
            <person name="Najar F.Z."/>
            <person name="Lai H."/>
            <person name="White J."/>
            <person name="Roe B.A."/>
            <person name="Ferretti J.J."/>
        </authorList>
    </citation>
    <scope>NUCLEOTIDE SEQUENCE [LARGE SCALE GENOMIC DNA]</scope>
    <source>
        <strain>ATCC 700610 / UA159</strain>
    </source>
</reference>
<comment type="function">
    <text evidence="1">Allows the formation of correctly charged Asn-tRNA(Asn) or Gln-tRNA(Gln) through the transamidation of misacylated Asp-tRNA(Asn) or Glu-tRNA(Gln) in organisms which lack either or both of asparaginyl-tRNA or glutaminyl-tRNA synthetases. The reaction takes place in the presence of glutamine and ATP through an activated phospho-Asp-tRNA(Asn) or phospho-Glu-tRNA(Gln).</text>
</comment>
<comment type="catalytic activity">
    <reaction evidence="1">
        <text>L-glutamyl-tRNA(Gln) + L-glutamine + ATP + H2O = L-glutaminyl-tRNA(Gln) + L-glutamate + ADP + phosphate + H(+)</text>
        <dbReference type="Rhea" id="RHEA:17521"/>
        <dbReference type="Rhea" id="RHEA-COMP:9681"/>
        <dbReference type="Rhea" id="RHEA-COMP:9684"/>
        <dbReference type="ChEBI" id="CHEBI:15377"/>
        <dbReference type="ChEBI" id="CHEBI:15378"/>
        <dbReference type="ChEBI" id="CHEBI:29985"/>
        <dbReference type="ChEBI" id="CHEBI:30616"/>
        <dbReference type="ChEBI" id="CHEBI:43474"/>
        <dbReference type="ChEBI" id="CHEBI:58359"/>
        <dbReference type="ChEBI" id="CHEBI:78520"/>
        <dbReference type="ChEBI" id="CHEBI:78521"/>
        <dbReference type="ChEBI" id="CHEBI:456216"/>
    </reaction>
</comment>
<comment type="catalytic activity">
    <reaction evidence="1">
        <text>L-aspartyl-tRNA(Asn) + L-glutamine + ATP + H2O = L-asparaginyl-tRNA(Asn) + L-glutamate + ADP + phosphate + 2 H(+)</text>
        <dbReference type="Rhea" id="RHEA:14513"/>
        <dbReference type="Rhea" id="RHEA-COMP:9674"/>
        <dbReference type="Rhea" id="RHEA-COMP:9677"/>
        <dbReference type="ChEBI" id="CHEBI:15377"/>
        <dbReference type="ChEBI" id="CHEBI:15378"/>
        <dbReference type="ChEBI" id="CHEBI:29985"/>
        <dbReference type="ChEBI" id="CHEBI:30616"/>
        <dbReference type="ChEBI" id="CHEBI:43474"/>
        <dbReference type="ChEBI" id="CHEBI:58359"/>
        <dbReference type="ChEBI" id="CHEBI:78515"/>
        <dbReference type="ChEBI" id="CHEBI:78516"/>
        <dbReference type="ChEBI" id="CHEBI:456216"/>
    </reaction>
</comment>
<comment type="subunit">
    <text evidence="1">Heterotrimer of A, B and C subunits.</text>
</comment>
<comment type="similarity">
    <text evidence="1">Belongs to the GatB/GatE family. GatB subfamily.</text>
</comment>
<gene>
    <name evidence="1" type="primary">gatB</name>
    <name type="ordered locus">SMU_1819</name>
</gene>
<keyword id="KW-0067">ATP-binding</keyword>
<keyword id="KW-0436">Ligase</keyword>
<keyword id="KW-0547">Nucleotide-binding</keyword>
<keyword id="KW-0648">Protein biosynthesis</keyword>
<keyword id="KW-1185">Reference proteome</keyword>
<evidence type="ECO:0000255" key="1">
    <source>
        <dbReference type="HAMAP-Rule" id="MF_00121"/>
    </source>
</evidence>
<organism>
    <name type="scientific">Streptococcus mutans serotype c (strain ATCC 700610 / UA159)</name>
    <dbReference type="NCBI Taxonomy" id="210007"/>
    <lineage>
        <taxon>Bacteria</taxon>
        <taxon>Bacillati</taxon>
        <taxon>Bacillota</taxon>
        <taxon>Bacilli</taxon>
        <taxon>Lactobacillales</taxon>
        <taxon>Streptococcaceae</taxon>
        <taxon>Streptococcus</taxon>
    </lineage>
</organism>
<proteinExistence type="inferred from homology"/>
<protein>
    <recommendedName>
        <fullName evidence="1">Aspartyl/glutamyl-tRNA(Asn/Gln) amidotransferase subunit B</fullName>
        <shortName evidence="1">Asp/Glu-ADT subunit B</shortName>
        <ecNumber evidence="1">6.3.5.-</ecNumber>
    </recommendedName>
</protein>
<name>GATB_STRMU</name>